<dbReference type="EMBL" id="X51471">
    <property type="protein sequence ID" value="CAA35833.1"/>
    <property type="molecule type" value="Genomic_DNA"/>
</dbReference>
<dbReference type="PIR" id="S08495">
    <property type="entry name" value="R5VF32"/>
</dbReference>
<dbReference type="SMR" id="P15820"/>
<dbReference type="GO" id="GO:0009507">
    <property type="term" value="C:chloroplast"/>
    <property type="evidence" value="ECO:0007669"/>
    <property type="project" value="UniProtKB-SubCell"/>
</dbReference>
<dbReference type="GO" id="GO:0015934">
    <property type="term" value="C:large ribosomal subunit"/>
    <property type="evidence" value="ECO:0007669"/>
    <property type="project" value="InterPro"/>
</dbReference>
<dbReference type="GO" id="GO:0003735">
    <property type="term" value="F:structural constituent of ribosome"/>
    <property type="evidence" value="ECO:0007669"/>
    <property type="project" value="InterPro"/>
</dbReference>
<dbReference type="GO" id="GO:0006412">
    <property type="term" value="P:translation"/>
    <property type="evidence" value="ECO:0007669"/>
    <property type="project" value="UniProtKB-UniRule"/>
</dbReference>
<dbReference type="HAMAP" id="MF_00340">
    <property type="entry name" value="Ribosomal_bL32"/>
    <property type="match status" value="1"/>
</dbReference>
<dbReference type="InterPro" id="IPR002677">
    <property type="entry name" value="Ribosomal_bL32"/>
</dbReference>
<dbReference type="InterPro" id="IPR044958">
    <property type="entry name" value="Ribosomal_bL32_plant/cyanobact"/>
</dbReference>
<dbReference type="PANTHER" id="PTHR36083">
    <property type="entry name" value="50S RIBOSOMAL PROTEIN L32, CHLOROPLASTIC"/>
    <property type="match status" value="1"/>
</dbReference>
<dbReference type="PANTHER" id="PTHR36083:SF1">
    <property type="entry name" value="LARGE RIBOSOMAL SUBUNIT PROTEIN BL32C"/>
    <property type="match status" value="1"/>
</dbReference>
<dbReference type="Pfam" id="PF01783">
    <property type="entry name" value="Ribosomal_L32p"/>
    <property type="match status" value="1"/>
</dbReference>
<protein>
    <recommendedName>
        <fullName evidence="1">Large ribosomal subunit protein bL32c</fullName>
    </recommendedName>
    <alternativeName>
        <fullName>50S ribosomal protein L32, chloroplastic</fullName>
    </alternativeName>
</protein>
<feature type="chain" id="PRO_0000172482" description="Large ribosomal subunit protein bL32c">
    <location>
        <begin position="1"/>
        <end position="48"/>
    </location>
</feature>
<comment type="subcellular location">
    <subcellularLocation>
        <location>Plastid</location>
        <location>Chloroplast</location>
    </subcellularLocation>
</comment>
<comment type="similarity">
    <text evidence="1">Belongs to the bacterial ribosomal protein bL32 family.</text>
</comment>
<sequence>MPVPKKRTSISKKKIRKNFWKKKGYKAALKAFSLADSILTGTSKVIVL</sequence>
<accession>P15820</accession>
<evidence type="ECO:0000305" key="1"/>
<keyword id="KW-0150">Chloroplast</keyword>
<keyword id="KW-0934">Plastid</keyword>
<keyword id="KW-0687">Ribonucleoprotein</keyword>
<keyword id="KW-0689">Ribosomal protein</keyword>
<geneLocation type="chloroplast"/>
<gene>
    <name type="primary">rpl32</name>
</gene>
<name>RK32_VICFA</name>
<organism>
    <name type="scientific">Vicia faba</name>
    <name type="common">Broad bean</name>
    <name type="synonym">Faba vulgaris</name>
    <dbReference type="NCBI Taxonomy" id="3906"/>
    <lineage>
        <taxon>Eukaryota</taxon>
        <taxon>Viridiplantae</taxon>
        <taxon>Streptophyta</taxon>
        <taxon>Embryophyta</taxon>
        <taxon>Tracheophyta</taxon>
        <taxon>Spermatophyta</taxon>
        <taxon>Magnoliopsida</taxon>
        <taxon>eudicotyledons</taxon>
        <taxon>Gunneridae</taxon>
        <taxon>Pentapetalae</taxon>
        <taxon>rosids</taxon>
        <taxon>fabids</taxon>
        <taxon>Fabales</taxon>
        <taxon>Fabaceae</taxon>
        <taxon>Papilionoideae</taxon>
        <taxon>50 kb inversion clade</taxon>
        <taxon>NPAAA clade</taxon>
        <taxon>Hologalegina</taxon>
        <taxon>IRL clade</taxon>
        <taxon>Fabeae</taxon>
        <taxon>Vicia</taxon>
    </lineage>
</organism>
<reference key="1">
    <citation type="journal article" date="1990" name="Nucleic Acids Res.">
        <title>Sequence of the trnH gene and the inverted repeat structure deletion site of the broad bean chloroplast genome.</title>
        <authorList>
            <person name="Herdenberger F."/>
            <person name="Pillay D.T.N."/>
            <person name="Steinmetz A."/>
        </authorList>
    </citation>
    <scope>NUCLEOTIDE SEQUENCE [GENOMIC DNA]</scope>
</reference>
<reference key="2">
    <citation type="journal article" date="1988" name="Curr. Genet.">
        <title>Organization and nucleotide sequence of the broad bean chloroplast genes trnL-UAG, ndhF and two unidentified open reading frames.</title>
        <authorList>
            <person name="Herdenberger F."/>
            <person name="Weil J.H."/>
            <person name="Steinmetz A."/>
        </authorList>
    </citation>
    <scope>NUCLEOTIDE SEQUENCE [GENOMIC DNA]</scope>
</reference>
<proteinExistence type="inferred from homology"/>